<proteinExistence type="inferred from homology"/>
<protein>
    <recommendedName>
        <fullName evidence="2">Cytochrome b6-f complex subunit 4</fullName>
    </recommendedName>
    <alternativeName>
        <fullName evidence="2">17 kDa polypeptide</fullName>
    </alternativeName>
</protein>
<comment type="function">
    <text evidence="2">Component of the cytochrome b6-f complex, which mediates electron transfer between photosystem II (PSII) and photosystem I (PSI), cyclic electron flow around PSI, and state transitions.</text>
</comment>
<comment type="subunit">
    <text evidence="1">The 4 large subunits of the cytochrome b6-f complex are cytochrome b6, subunit IV (17 kDa polypeptide, petD), cytochrome f and the Rieske protein, while the 4 small subunits are petG, petL, petM and petN. The complex functions as a dimer (By similarity).</text>
</comment>
<comment type="subcellular location">
    <subcellularLocation>
        <location evidence="2">Plastid</location>
        <location evidence="2">Chloroplast thylakoid membrane</location>
        <topology evidence="2">Multi-pass membrane protein</topology>
    </subcellularLocation>
</comment>
<comment type="similarity">
    <text evidence="2">Belongs to the cytochrome b family. PetD subfamily.</text>
</comment>
<name>PETD_NICSY</name>
<keyword id="KW-0150">Chloroplast</keyword>
<keyword id="KW-0249">Electron transport</keyword>
<keyword id="KW-0472">Membrane</keyword>
<keyword id="KW-0602">Photosynthesis</keyword>
<keyword id="KW-0934">Plastid</keyword>
<keyword id="KW-1185">Reference proteome</keyword>
<keyword id="KW-0793">Thylakoid</keyword>
<keyword id="KW-0812">Transmembrane</keyword>
<keyword id="KW-1133">Transmembrane helix</keyword>
<keyword id="KW-0813">Transport</keyword>
<dbReference type="EMBL" id="AB237912">
    <property type="protein sequence ID" value="BAE46685.1"/>
    <property type="molecule type" value="Genomic_DNA"/>
</dbReference>
<dbReference type="RefSeq" id="YP_358709.1">
    <property type="nucleotide sequence ID" value="NC_007500.1"/>
</dbReference>
<dbReference type="SMR" id="Q3C1M4"/>
<dbReference type="GeneID" id="3735072"/>
<dbReference type="KEGG" id="nsy:3735072"/>
<dbReference type="OrthoDB" id="17605at4085"/>
<dbReference type="Proteomes" id="UP000189701">
    <property type="component" value="Chloroplast Pltd"/>
</dbReference>
<dbReference type="GO" id="GO:0009535">
    <property type="term" value="C:chloroplast thylakoid membrane"/>
    <property type="evidence" value="ECO:0007669"/>
    <property type="project" value="UniProtKB-SubCell"/>
</dbReference>
<dbReference type="GO" id="GO:0045158">
    <property type="term" value="F:electron transporter, transferring electrons within cytochrome b6/f complex of photosystem II activity"/>
    <property type="evidence" value="ECO:0007669"/>
    <property type="project" value="UniProtKB-UniRule"/>
</dbReference>
<dbReference type="GO" id="GO:0045156">
    <property type="term" value="F:electron transporter, transferring electrons within the cyclic electron transport pathway of photosynthesis activity"/>
    <property type="evidence" value="ECO:0007669"/>
    <property type="project" value="InterPro"/>
</dbReference>
<dbReference type="GO" id="GO:0016491">
    <property type="term" value="F:oxidoreductase activity"/>
    <property type="evidence" value="ECO:0007669"/>
    <property type="project" value="InterPro"/>
</dbReference>
<dbReference type="GO" id="GO:0009767">
    <property type="term" value="P:photosynthetic electron transport chain"/>
    <property type="evidence" value="ECO:0007669"/>
    <property type="project" value="InterPro"/>
</dbReference>
<dbReference type="CDD" id="cd00290">
    <property type="entry name" value="cytochrome_b_C"/>
    <property type="match status" value="1"/>
</dbReference>
<dbReference type="FunFam" id="1.10.287.980:FF:000001">
    <property type="entry name" value="Cytochrome b6-f complex subunit 4"/>
    <property type="match status" value="1"/>
</dbReference>
<dbReference type="FunFam" id="1.20.5.510:FF:000002">
    <property type="entry name" value="Cytochrome b6-f complex subunit 4"/>
    <property type="match status" value="1"/>
</dbReference>
<dbReference type="Gene3D" id="1.10.287.980">
    <property type="entry name" value="plastocyanin oxidoreductase"/>
    <property type="match status" value="1"/>
</dbReference>
<dbReference type="Gene3D" id="1.20.5.510">
    <property type="entry name" value="Single helix bin"/>
    <property type="match status" value="1"/>
</dbReference>
<dbReference type="HAMAP" id="MF_01344">
    <property type="entry name" value="Cytb6_f_subIV"/>
    <property type="match status" value="1"/>
</dbReference>
<dbReference type="InterPro" id="IPR005798">
    <property type="entry name" value="Cyt_b/b6_C"/>
</dbReference>
<dbReference type="InterPro" id="IPR036150">
    <property type="entry name" value="Cyt_b/b6_C_sf"/>
</dbReference>
<dbReference type="InterPro" id="IPR005870">
    <property type="entry name" value="Cyt_b6/f_cplx_suIV"/>
</dbReference>
<dbReference type="InterPro" id="IPR048260">
    <property type="entry name" value="Cytochrome_b_C_euk/bac"/>
</dbReference>
<dbReference type="NCBIfam" id="TIGR01156">
    <property type="entry name" value="cytb6_f_IV"/>
    <property type="match status" value="1"/>
</dbReference>
<dbReference type="PANTHER" id="PTHR19271">
    <property type="entry name" value="CYTOCHROME B"/>
    <property type="match status" value="1"/>
</dbReference>
<dbReference type="PANTHER" id="PTHR19271:SF16">
    <property type="entry name" value="CYTOCHROME B"/>
    <property type="match status" value="1"/>
</dbReference>
<dbReference type="Pfam" id="PF00032">
    <property type="entry name" value="Cytochrom_B_C"/>
    <property type="match status" value="1"/>
</dbReference>
<dbReference type="PIRSF" id="PIRSF000033">
    <property type="entry name" value="B6f_17K"/>
    <property type="match status" value="1"/>
</dbReference>
<dbReference type="SUPFAM" id="SSF81648">
    <property type="entry name" value="a domain/subunit of cytochrome bc1 complex (Ubiquinol-cytochrome c reductase)"/>
    <property type="match status" value="1"/>
</dbReference>
<dbReference type="PROSITE" id="PS51003">
    <property type="entry name" value="CYTB_CTER"/>
    <property type="match status" value="1"/>
</dbReference>
<reference key="1">
    <citation type="journal article" date="2006" name="Mol. Genet. Genomics">
        <title>The chloroplast genome of Nicotiana sylvestris and Nicotiana tomentosiformis: complete sequencing confirms that the Nicotiana sylvestris progenitor is the maternal genome donor of Nicotiana tabacum.</title>
        <authorList>
            <person name="Yukawa M."/>
            <person name="Tsudzuki T."/>
            <person name="Sugiura M."/>
        </authorList>
    </citation>
    <scope>NUCLEOTIDE SEQUENCE [LARGE SCALE GENOMIC DNA]</scope>
</reference>
<feature type="chain" id="PRO_0000061872" description="Cytochrome b6-f complex subunit 4">
    <location>
        <begin position="1"/>
        <end position="160"/>
    </location>
</feature>
<feature type="transmembrane region" description="Helical" evidence="2">
    <location>
        <begin position="36"/>
        <end position="56"/>
    </location>
</feature>
<feature type="transmembrane region" description="Helical" evidence="2">
    <location>
        <begin position="95"/>
        <end position="115"/>
    </location>
</feature>
<feature type="transmembrane region" description="Helical" evidence="2">
    <location>
        <begin position="131"/>
        <end position="151"/>
    </location>
</feature>
<accession>Q3C1M4</accession>
<evidence type="ECO:0000250" key="1"/>
<evidence type="ECO:0000255" key="2">
    <source>
        <dbReference type="HAMAP-Rule" id="MF_01344"/>
    </source>
</evidence>
<gene>
    <name evidence="2" type="primary">petD</name>
</gene>
<organism>
    <name type="scientific">Nicotiana sylvestris</name>
    <name type="common">Wood tobacco</name>
    <name type="synonym">South American tobacco</name>
    <dbReference type="NCBI Taxonomy" id="4096"/>
    <lineage>
        <taxon>Eukaryota</taxon>
        <taxon>Viridiplantae</taxon>
        <taxon>Streptophyta</taxon>
        <taxon>Embryophyta</taxon>
        <taxon>Tracheophyta</taxon>
        <taxon>Spermatophyta</taxon>
        <taxon>Magnoliopsida</taxon>
        <taxon>eudicotyledons</taxon>
        <taxon>Gunneridae</taxon>
        <taxon>Pentapetalae</taxon>
        <taxon>asterids</taxon>
        <taxon>lamiids</taxon>
        <taxon>Solanales</taxon>
        <taxon>Solanaceae</taxon>
        <taxon>Nicotianoideae</taxon>
        <taxon>Nicotianeae</taxon>
        <taxon>Nicotiana</taxon>
    </lineage>
</organism>
<geneLocation type="chloroplast"/>
<sequence>MGVTKKPDLNDPVLRAKLAKGMGHNYYGEPAWPNDLLYIFPVVILGTIACNVGLAVLEPSMIGEPADPFATPLEILPEWYFFPVFQILRTVPNKLLGVLLMVSVPAGLLTVPFLENVNKFQNPFRRPVATTVFLIGTAVALWLGIGATLPIDKSLTLGLF</sequence>